<organism>
    <name type="scientific">Bradyrhizobium sp. (strain ORS 278)</name>
    <dbReference type="NCBI Taxonomy" id="114615"/>
    <lineage>
        <taxon>Bacteria</taxon>
        <taxon>Pseudomonadati</taxon>
        <taxon>Pseudomonadota</taxon>
        <taxon>Alphaproteobacteria</taxon>
        <taxon>Hyphomicrobiales</taxon>
        <taxon>Nitrobacteraceae</taxon>
        <taxon>Bradyrhizobium</taxon>
    </lineage>
</organism>
<comment type="function">
    <text evidence="1">Catalytic subunit of the periplasmic nitrate reductase complex NapAB. Receives electrons from NapB and catalyzes the reduction of nitrate to nitrite.</text>
</comment>
<comment type="catalytic activity">
    <reaction evidence="1">
        <text>2 Fe(II)-[cytochrome] + nitrate + 2 H(+) = 2 Fe(III)-[cytochrome] + nitrite + H2O</text>
        <dbReference type="Rhea" id="RHEA:12909"/>
        <dbReference type="Rhea" id="RHEA-COMP:11777"/>
        <dbReference type="Rhea" id="RHEA-COMP:11778"/>
        <dbReference type="ChEBI" id="CHEBI:15377"/>
        <dbReference type="ChEBI" id="CHEBI:15378"/>
        <dbReference type="ChEBI" id="CHEBI:16301"/>
        <dbReference type="ChEBI" id="CHEBI:17632"/>
        <dbReference type="ChEBI" id="CHEBI:29033"/>
        <dbReference type="ChEBI" id="CHEBI:29034"/>
        <dbReference type="EC" id="1.9.6.1"/>
    </reaction>
</comment>
<comment type="cofactor">
    <cofactor evidence="1">
        <name>[4Fe-4S] cluster</name>
        <dbReference type="ChEBI" id="CHEBI:49883"/>
    </cofactor>
    <text evidence="1">Binds 1 [4Fe-4S] cluster.</text>
</comment>
<comment type="cofactor">
    <cofactor evidence="1">
        <name>Mo-bis(molybdopterin guanine dinucleotide)</name>
        <dbReference type="ChEBI" id="CHEBI:60539"/>
    </cofactor>
    <text evidence="1">Binds 1 molybdenum-bis(molybdopterin guanine dinucleotide) (Mo-bis-MGD) cofactor per subunit.</text>
</comment>
<comment type="subunit">
    <text evidence="1">Component of the periplasmic nitrate reductase NapAB complex composed of NapA and NapB.</text>
</comment>
<comment type="subcellular location">
    <subcellularLocation>
        <location evidence="1">Periplasm</location>
    </subcellularLocation>
</comment>
<comment type="PTM">
    <text evidence="1">Predicted to be exported by the Tat system. The position of the signal peptide cleavage has not been experimentally proven.</text>
</comment>
<comment type="similarity">
    <text evidence="1">Belongs to the prokaryotic molybdopterin-containing oxidoreductase family. NasA/NapA/NarB subfamily.</text>
</comment>
<dbReference type="EC" id="1.9.6.1" evidence="1"/>
<dbReference type="EMBL" id="CU234118">
    <property type="protein sequence ID" value="CAL79577.1"/>
    <property type="molecule type" value="Genomic_DNA"/>
</dbReference>
<dbReference type="RefSeq" id="WP_012029476.1">
    <property type="nucleotide sequence ID" value="NC_009445.1"/>
</dbReference>
<dbReference type="SMR" id="A4Z0A1"/>
<dbReference type="STRING" id="114615.BRADO5916"/>
<dbReference type="KEGG" id="bra:BRADO5916"/>
<dbReference type="eggNOG" id="COG0243">
    <property type="taxonomic scope" value="Bacteria"/>
</dbReference>
<dbReference type="HOGENOM" id="CLU_000422_13_4_5"/>
<dbReference type="OrthoDB" id="9816402at2"/>
<dbReference type="Proteomes" id="UP000001994">
    <property type="component" value="Chromosome"/>
</dbReference>
<dbReference type="GO" id="GO:0016020">
    <property type="term" value="C:membrane"/>
    <property type="evidence" value="ECO:0007669"/>
    <property type="project" value="TreeGrafter"/>
</dbReference>
<dbReference type="GO" id="GO:0009325">
    <property type="term" value="C:nitrate reductase complex"/>
    <property type="evidence" value="ECO:0007669"/>
    <property type="project" value="TreeGrafter"/>
</dbReference>
<dbReference type="GO" id="GO:0042597">
    <property type="term" value="C:periplasmic space"/>
    <property type="evidence" value="ECO:0007669"/>
    <property type="project" value="UniProtKB-SubCell"/>
</dbReference>
<dbReference type="GO" id="GO:0051539">
    <property type="term" value="F:4 iron, 4 sulfur cluster binding"/>
    <property type="evidence" value="ECO:0007669"/>
    <property type="project" value="UniProtKB-KW"/>
</dbReference>
<dbReference type="GO" id="GO:0009055">
    <property type="term" value="F:electron transfer activity"/>
    <property type="evidence" value="ECO:0007669"/>
    <property type="project" value="UniProtKB-UniRule"/>
</dbReference>
<dbReference type="GO" id="GO:0005506">
    <property type="term" value="F:iron ion binding"/>
    <property type="evidence" value="ECO:0007669"/>
    <property type="project" value="UniProtKB-UniRule"/>
</dbReference>
<dbReference type="GO" id="GO:0030151">
    <property type="term" value="F:molybdenum ion binding"/>
    <property type="evidence" value="ECO:0007669"/>
    <property type="project" value="InterPro"/>
</dbReference>
<dbReference type="GO" id="GO:0043546">
    <property type="term" value="F:molybdopterin cofactor binding"/>
    <property type="evidence" value="ECO:0007669"/>
    <property type="project" value="InterPro"/>
</dbReference>
<dbReference type="GO" id="GO:0050140">
    <property type="term" value="F:nitrate reductase (cytochrome) activity"/>
    <property type="evidence" value="ECO:0007669"/>
    <property type="project" value="UniProtKB-EC"/>
</dbReference>
<dbReference type="GO" id="GO:0045333">
    <property type="term" value="P:cellular respiration"/>
    <property type="evidence" value="ECO:0007669"/>
    <property type="project" value="UniProtKB-ARBA"/>
</dbReference>
<dbReference type="GO" id="GO:0006777">
    <property type="term" value="P:Mo-molybdopterin cofactor biosynthetic process"/>
    <property type="evidence" value="ECO:0007669"/>
    <property type="project" value="UniProtKB-UniRule"/>
</dbReference>
<dbReference type="GO" id="GO:0042128">
    <property type="term" value="P:nitrate assimilation"/>
    <property type="evidence" value="ECO:0007669"/>
    <property type="project" value="UniProtKB-UniRule"/>
</dbReference>
<dbReference type="CDD" id="cd02791">
    <property type="entry name" value="MopB_CT_Nitrate-R-NapA-like"/>
    <property type="match status" value="1"/>
</dbReference>
<dbReference type="CDD" id="cd02754">
    <property type="entry name" value="MopB_Nitrate-R-NapA-like"/>
    <property type="match status" value="1"/>
</dbReference>
<dbReference type="FunFam" id="2.40.40.20:FF:000005">
    <property type="entry name" value="Periplasmic nitrate reductase"/>
    <property type="match status" value="1"/>
</dbReference>
<dbReference type="Gene3D" id="2.40.40.20">
    <property type="match status" value="1"/>
</dbReference>
<dbReference type="Gene3D" id="3.30.200.210">
    <property type="match status" value="1"/>
</dbReference>
<dbReference type="Gene3D" id="3.40.50.740">
    <property type="match status" value="1"/>
</dbReference>
<dbReference type="Gene3D" id="3.40.228.10">
    <property type="entry name" value="Dimethylsulfoxide Reductase, domain 2"/>
    <property type="match status" value="1"/>
</dbReference>
<dbReference type="HAMAP" id="MF_01630">
    <property type="entry name" value="Nitrate_reduct_NapA"/>
    <property type="match status" value="1"/>
</dbReference>
<dbReference type="InterPro" id="IPR009010">
    <property type="entry name" value="Asp_de-COase-like_dom_sf"/>
</dbReference>
<dbReference type="InterPro" id="IPR041957">
    <property type="entry name" value="CT_Nitrate-R-NapA-like"/>
</dbReference>
<dbReference type="InterPro" id="IPR006657">
    <property type="entry name" value="MoPterin_dinucl-bd_dom"/>
</dbReference>
<dbReference type="InterPro" id="IPR006656">
    <property type="entry name" value="Mopterin_OxRdtase"/>
</dbReference>
<dbReference type="InterPro" id="IPR006963">
    <property type="entry name" value="Mopterin_OxRdtase_4Fe-4S_dom"/>
</dbReference>
<dbReference type="InterPro" id="IPR027467">
    <property type="entry name" value="MopterinOxRdtase_cofactor_BS"/>
</dbReference>
<dbReference type="InterPro" id="IPR010051">
    <property type="entry name" value="Periplasm_NO3_reductase_lsu"/>
</dbReference>
<dbReference type="InterPro" id="IPR050123">
    <property type="entry name" value="Prok_molybdopt-oxidoreductase"/>
</dbReference>
<dbReference type="InterPro" id="IPR006311">
    <property type="entry name" value="TAT_signal"/>
</dbReference>
<dbReference type="NCBIfam" id="TIGR01706">
    <property type="entry name" value="NAPA"/>
    <property type="match status" value="1"/>
</dbReference>
<dbReference type="NCBIfam" id="NF010055">
    <property type="entry name" value="PRK13532.1"/>
    <property type="match status" value="1"/>
</dbReference>
<dbReference type="PANTHER" id="PTHR43105:SF11">
    <property type="entry name" value="PERIPLASMIC NITRATE REDUCTASE"/>
    <property type="match status" value="1"/>
</dbReference>
<dbReference type="PANTHER" id="PTHR43105">
    <property type="entry name" value="RESPIRATORY NITRATE REDUCTASE"/>
    <property type="match status" value="1"/>
</dbReference>
<dbReference type="Pfam" id="PF04879">
    <property type="entry name" value="Molybdop_Fe4S4"/>
    <property type="match status" value="1"/>
</dbReference>
<dbReference type="Pfam" id="PF00384">
    <property type="entry name" value="Molybdopterin"/>
    <property type="match status" value="1"/>
</dbReference>
<dbReference type="Pfam" id="PF01568">
    <property type="entry name" value="Molydop_binding"/>
    <property type="match status" value="1"/>
</dbReference>
<dbReference type="SMART" id="SM00926">
    <property type="entry name" value="Molybdop_Fe4S4"/>
    <property type="match status" value="1"/>
</dbReference>
<dbReference type="SUPFAM" id="SSF50692">
    <property type="entry name" value="ADC-like"/>
    <property type="match status" value="1"/>
</dbReference>
<dbReference type="SUPFAM" id="SSF53706">
    <property type="entry name" value="Formate dehydrogenase/DMSO reductase, domains 1-3"/>
    <property type="match status" value="1"/>
</dbReference>
<dbReference type="PROSITE" id="PS51669">
    <property type="entry name" value="4FE4S_MOW_BIS_MGD"/>
    <property type="match status" value="1"/>
</dbReference>
<dbReference type="PROSITE" id="PS00551">
    <property type="entry name" value="MOLYBDOPTERIN_PROK_1"/>
    <property type="match status" value="1"/>
</dbReference>
<dbReference type="PROSITE" id="PS51318">
    <property type="entry name" value="TAT"/>
    <property type="match status" value="1"/>
</dbReference>
<evidence type="ECO:0000255" key="1">
    <source>
        <dbReference type="HAMAP-Rule" id="MF_01630"/>
    </source>
</evidence>
<keyword id="KW-0004">4Fe-4S</keyword>
<keyword id="KW-0249">Electron transport</keyword>
<keyword id="KW-0408">Iron</keyword>
<keyword id="KW-0411">Iron-sulfur</keyword>
<keyword id="KW-0479">Metal-binding</keyword>
<keyword id="KW-0500">Molybdenum</keyword>
<keyword id="KW-0534">Nitrate assimilation</keyword>
<keyword id="KW-0560">Oxidoreductase</keyword>
<keyword id="KW-0574">Periplasm</keyword>
<keyword id="KW-1185">Reference proteome</keyword>
<keyword id="KW-0732">Signal</keyword>
<keyword id="KW-0813">Transport</keyword>
<accession>A4Z0A1</accession>
<protein>
    <recommendedName>
        <fullName evidence="1">Periplasmic nitrate reductase</fullName>
        <ecNumber evidence="1">1.9.6.1</ecNumber>
    </recommendedName>
</protein>
<reference key="1">
    <citation type="journal article" date="2007" name="Science">
        <title>Legumes symbioses: absence of nod genes in photosynthetic bradyrhizobia.</title>
        <authorList>
            <person name="Giraud E."/>
            <person name="Moulin L."/>
            <person name="Vallenet D."/>
            <person name="Barbe V."/>
            <person name="Cytryn E."/>
            <person name="Avarre J.-C."/>
            <person name="Jaubert M."/>
            <person name="Simon D."/>
            <person name="Cartieaux F."/>
            <person name="Prin Y."/>
            <person name="Bena G."/>
            <person name="Hannibal L."/>
            <person name="Fardoux J."/>
            <person name="Kojadinovic M."/>
            <person name="Vuillet L."/>
            <person name="Lajus A."/>
            <person name="Cruveiller S."/>
            <person name="Rouy Z."/>
            <person name="Mangenot S."/>
            <person name="Segurens B."/>
            <person name="Dossat C."/>
            <person name="Franck W.L."/>
            <person name="Chang W.-S."/>
            <person name="Saunders E."/>
            <person name="Bruce D."/>
            <person name="Richardson P."/>
            <person name="Normand P."/>
            <person name="Dreyfus B."/>
            <person name="Pignol D."/>
            <person name="Stacey G."/>
            <person name="Emerich D."/>
            <person name="Vermeglio A."/>
            <person name="Medigue C."/>
            <person name="Sadowsky M."/>
        </authorList>
    </citation>
    <scope>NUCLEOTIDE SEQUENCE [LARGE SCALE GENOMIC DNA]</scope>
    <source>
        <strain>ORS 278</strain>
    </source>
</reference>
<gene>
    <name evidence="1" type="primary">napA</name>
    <name type="ordered locus">BRADO5916</name>
</gene>
<name>NAPA_BRASO</name>
<feature type="signal peptide" description="Tat-type signal" evidence="1">
    <location>
        <begin position="1"/>
        <end position="32"/>
    </location>
</feature>
<feature type="chain" id="PRO_1000069710" description="Periplasmic nitrate reductase" evidence="1">
    <location>
        <begin position="33"/>
        <end position="834"/>
    </location>
</feature>
<feature type="domain" description="4Fe-4S Mo/W bis-MGD-type" evidence="1">
    <location>
        <begin position="44"/>
        <end position="100"/>
    </location>
</feature>
<feature type="binding site" evidence="1">
    <location>
        <position position="51"/>
    </location>
    <ligand>
        <name>[4Fe-4S] cluster</name>
        <dbReference type="ChEBI" id="CHEBI:49883"/>
    </ligand>
</feature>
<feature type="binding site" evidence="1">
    <location>
        <position position="54"/>
    </location>
    <ligand>
        <name>[4Fe-4S] cluster</name>
        <dbReference type="ChEBI" id="CHEBI:49883"/>
    </ligand>
</feature>
<feature type="binding site" evidence="1">
    <location>
        <position position="58"/>
    </location>
    <ligand>
        <name>[4Fe-4S] cluster</name>
        <dbReference type="ChEBI" id="CHEBI:49883"/>
    </ligand>
</feature>
<feature type="binding site" evidence="1">
    <location>
        <position position="86"/>
    </location>
    <ligand>
        <name>[4Fe-4S] cluster</name>
        <dbReference type="ChEBI" id="CHEBI:49883"/>
    </ligand>
</feature>
<feature type="binding site" evidence="1">
    <location>
        <position position="88"/>
    </location>
    <ligand>
        <name>Mo-bis(molybdopterin guanine dinucleotide)</name>
        <dbReference type="ChEBI" id="CHEBI:60539"/>
    </ligand>
</feature>
<feature type="binding site" evidence="1">
    <location>
        <position position="155"/>
    </location>
    <ligand>
        <name>Mo-bis(molybdopterin guanine dinucleotide)</name>
        <dbReference type="ChEBI" id="CHEBI:60539"/>
    </ligand>
</feature>
<feature type="binding site" evidence="1">
    <location>
        <position position="180"/>
    </location>
    <ligand>
        <name>Mo-bis(molybdopterin guanine dinucleotide)</name>
        <dbReference type="ChEBI" id="CHEBI:60539"/>
    </ligand>
</feature>
<feature type="binding site" evidence="1">
    <location>
        <position position="184"/>
    </location>
    <ligand>
        <name>Mo-bis(molybdopterin guanine dinucleotide)</name>
        <dbReference type="ChEBI" id="CHEBI:60539"/>
    </ligand>
</feature>
<feature type="binding site" evidence="1">
    <location>
        <begin position="217"/>
        <end position="224"/>
    </location>
    <ligand>
        <name>Mo-bis(molybdopterin guanine dinucleotide)</name>
        <dbReference type="ChEBI" id="CHEBI:60539"/>
    </ligand>
</feature>
<feature type="binding site" evidence="1">
    <location>
        <begin position="248"/>
        <end position="252"/>
    </location>
    <ligand>
        <name>Mo-bis(molybdopterin guanine dinucleotide)</name>
        <dbReference type="ChEBI" id="CHEBI:60539"/>
    </ligand>
</feature>
<feature type="binding site" evidence="1">
    <location>
        <begin position="267"/>
        <end position="269"/>
    </location>
    <ligand>
        <name>Mo-bis(molybdopterin guanine dinucleotide)</name>
        <dbReference type="ChEBI" id="CHEBI:60539"/>
    </ligand>
</feature>
<feature type="binding site" evidence="1">
    <location>
        <position position="378"/>
    </location>
    <ligand>
        <name>Mo-bis(molybdopterin guanine dinucleotide)</name>
        <dbReference type="ChEBI" id="CHEBI:60539"/>
    </ligand>
</feature>
<feature type="binding site" evidence="1">
    <location>
        <position position="382"/>
    </location>
    <ligand>
        <name>Mo-bis(molybdopterin guanine dinucleotide)</name>
        <dbReference type="ChEBI" id="CHEBI:60539"/>
    </ligand>
</feature>
<feature type="binding site" evidence="1">
    <location>
        <position position="488"/>
    </location>
    <ligand>
        <name>Mo-bis(molybdopterin guanine dinucleotide)</name>
        <dbReference type="ChEBI" id="CHEBI:60539"/>
    </ligand>
</feature>
<feature type="binding site" evidence="1">
    <location>
        <begin position="514"/>
        <end position="515"/>
    </location>
    <ligand>
        <name>Mo-bis(molybdopterin guanine dinucleotide)</name>
        <dbReference type="ChEBI" id="CHEBI:60539"/>
    </ligand>
</feature>
<feature type="binding site" evidence="1">
    <location>
        <position position="537"/>
    </location>
    <ligand>
        <name>Mo-bis(molybdopterin guanine dinucleotide)</name>
        <dbReference type="ChEBI" id="CHEBI:60539"/>
    </ligand>
</feature>
<feature type="binding site" evidence="1">
    <location>
        <position position="564"/>
    </location>
    <ligand>
        <name>Mo-bis(molybdopterin guanine dinucleotide)</name>
        <dbReference type="ChEBI" id="CHEBI:60539"/>
    </ligand>
</feature>
<feature type="binding site" evidence="1">
    <location>
        <begin position="724"/>
        <end position="733"/>
    </location>
    <ligand>
        <name>Mo-bis(molybdopterin guanine dinucleotide)</name>
        <dbReference type="ChEBI" id="CHEBI:60539"/>
    </ligand>
</feature>
<feature type="binding site" evidence="1">
    <location>
        <position position="800"/>
    </location>
    <ligand>
        <name>substrate</name>
    </ligand>
</feature>
<feature type="binding site" evidence="1">
    <location>
        <position position="808"/>
    </location>
    <ligand>
        <name>Mo-bis(molybdopterin guanine dinucleotide)</name>
        <dbReference type="ChEBI" id="CHEBI:60539"/>
    </ligand>
</feature>
<feature type="binding site" evidence="1">
    <location>
        <position position="825"/>
    </location>
    <ligand>
        <name>Mo-bis(molybdopterin guanine dinucleotide)</name>
        <dbReference type="ChEBI" id="CHEBI:60539"/>
    </ligand>
</feature>
<proteinExistence type="inferred from homology"/>
<sequence length="834" mass="93492">MTEPKIDRRQLLKLEAAAIAAAAAGMPTVARAANLVTEREATELKWDKAACRFCGTGCSVMVATKDNRVVATHGDIKAEVNRGLNCVKGYFLSKIMYGHDRLTHPMLRKTGGQYDKNGEFTPVSWDEAFDVMALKFKDALKKRGPSGVGMFGSGQWTIWEGYAASKLFKAGFRTNNIDPNARHCMASAVAGMMRTFGIDEPAGCYDDIEATDAFVLWGSNMAEMHPILWTRVTDRRLSAPHVKVAVLSTFEHRSFDLADVGMVFKPQTDLYILNAIANHIISTGRVNKDFVSAHTVFKKGQTDIGYGLRPEHPLQKKATGAAKANDATDISFDEYAKFVSDYTLEKAADMSGVPLNRLQALAELYADPKTKVVSFWTMGFNQHTRGVWCNNLVYNIHLLTGKIAEAGNSPFSLTGQPSACGTAREVGTFSHRLPADMVVTNKEHRTKAEHIWQLPEGTIPDKPGYHAVLQSRMLKDGLLNAYWVQVNNNLQAGPNANEETYPGFRNPDNFIVVSDAYPSVTALAADLILPTAMWVEKEGAYGNAERRTQFWHQLVSAPGEARSDLWQLMEFSKRFKIEDVWPEELIAKKPDVRGKTLFDVLYKNGQVDKFPLDQIEPGYANDESKAFGFYVHKGLFEEYASFGRGHGHDLAPFEAYHKERGLRWPVVDGKETRWRFREGSDPYVKAGTGVQFYGFPDGKARIFALPYEPPAESPDKDYPFWLSTGRVVEHWHSGTMTRRVPELYKAFPEAVCFMHPDDAQEANLRRGDEVKVASRRGFIRARVETRGRDKPPRGLVFVPWFDESKLINKVTLDATDPISLQTDYKKCAVRIERV</sequence>